<comment type="function">
    <text evidence="1">One of the primary rRNA binding proteins. Required for association of the 30S and 50S subunits to form the 70S ribosome, for tRNA binding and peptide bond formation. It has been suggested to have peptidyltransferase activity; this is somewhat controversial. Makes several contacts with the 16S rRNA in the 70S ribosome.</text>
</comment>
<comment type="subunit">
    <text evidence="1">Part of the 50S ribosomal subunit. Forms a bridge to the 30S subunit in the 70S ribosome.</text>
</comment>
<comment type="similarity">
    <text evidence="1">Belongs to the universal ribosomal protein uL2 family.</text>
</comment>
<proteinExistence type="evidence at protein level"/>
<protein>
    <recommendedName>
        <fullName evidence="1">Large ribosomal subunit protein uL2</fullName>
    </recommendedName>
    <alternativeName>
        <fullName evidence="3">50S ribosomal protein L2</fullName>
    </alternativeName>
</protein>
<name>RL2_STAAB</name>
<sequence length="277" mass="30155">MAIKKYKPITNGRRNMTSLDFAEITKTTPEKSLLKPLPKKAGRNNQGKLTVRHHGGGHKRQYRVIDFKRNKDGINAKVDSIQYDPNRSANIALVVYADGEKRYIIAPKGLEVGQIVESGAEADIKVGNALPLQNIPVGTVVHNIELKPGKGGQIARSAGASAQVLGKEGKYVLIRLRSGEVRMILSTCRATIGQVGNLQHELVNVGKAGRSRWKGIRPTVRGSVMNPNDHPHGGGEGRAPIGRPSPMSPWGKPTLGKKTRRGKKSSDKLIVRGRKKK</sequence>
<feature type="chain" id="PRO_0000237245" description="Large ribosomal subunit protein uL2">
    <location>
        <begin position="1"/>
        <end position="277"/>
    </location>
</feature>
<feature type="region of interest" description="Disordered" evidence="2">
    <location>
        <begin position="36"/>
        <end position="55"/>
    </location>
</feature>
<feature type="region of interest" description="Disordered" evidence="2">
    <location>
        <begin position="213"/>
        <end position="277"/>
    </location>
</feature>
<accession>Q2YYP9</accession>
<dbReference type="EMBL" id="AJ938182">
    <property type="protein sequence ID" value="CAI81808.1"/>
    <property type="molecule type" value="Genomic_DNA"/>
</dbReference>
<dbReference type="RefSeq" id="WP_000985472.1">
    <property type="nucleotide sequence ID" value="NC_007622.1"/>
</dbReference>
<dbReference type="PDB" id="6FXC">
    <property type="method" value="EM"/>
    <property type="resolution" value="6.76 A"/>
    <property type="chains" value="AC/BC=2-275"/>
</dbReference>
<dbReference type="PDBsum" id="6FXC"/>
<dbReference type="EMDB" id="EMD-0243"/>
<dbReference type="EMDB" id="EMD-3637"/>
<dbReference type="SMR" id="Q2YYP9"/>
<dbReference type="GeneID" id="98346559"/>
<dbReference type="KEGG" id="sab:SAB2119c"/>
<dbReference type="HOGENOM" id="CLU_036235_2_1_9"/>
<dbReference type="GO" id="GO:0015934">
    <property type="term" value="C:large ribosomal subunit"/>
    <property type="evidence" value="ECO:0007669"/>
    <property type="project" value="InterPro"/>
</dbReference>
<dbReference type="GO" id="GO:0019843">
    <property type="term" value="F:rRNA binding"/>
    <property type="evidence" value="ECO:0007669"/>
    <property type="project" value="UniProtKB-UniRule"/>
</dbReference>
<dbReference type="GO" id="GO:0003735">
    <property type="term" value="F:structural constituent of ribosome"/>
    <property type="evidence" value="ECO:0007669"/>
    <property type="project" value="InterPro"/>
</dbReference>
<dbReference type="GO" id="GO:0016740">
    <property type="term" value="F:transferase activity"/>
    <property type="evidence" value="ECO:0007669"/>
    <property type="project" value="InterPro"/>
</dbReference>
<dbReference type="GO" id="GO:0002181">
    <property type="term" value="P:cytoplasmic translation"/>
    <property type="evidence" value="ECO:0007669"/>
    <property type="project" value="TreeGrafter"/>
</dbReference>
<dbReference type="FunFam" id="2.30.30.30:FF:000001">
    <property type="entry name" value="50S ribosomal protein L2"/>
    <property type="match status" value="1"/>
</dbReference>
<dbReference type="FunFam" id="2.40.50.140:FF:000003">
    <property type="entry name" value="50S ribosomal protein L2"/>
    <property type="match status" value="1"/>
</dbReference>
<dbReference type="FunFam" id="4.10.950.10:FF:000001">
    <property type="entry name" value="50S ribosomal protein L2"/>
    <property type="match status" value="1"/>
</dbReference>
<dbReference type="Gene3D" id="2.30.30.30">
    <property type="match status" value="1"/>
</dbReference>
<dbReference type="Gene3D" id="2.40.50.140">
    <property type="entry name" value="Nucleic acid-binding proteins"/>
    <property type="match status" value="1"/>
</dbReference>
<dbReference type="Gene3D" id="4.10.950.10">
    <property type="entry name" value="Ribosomal protein L2, domain 3"/>
    <property type="match status" value="1"/>
</dbReference>
<dbReference type="HAMAP" id="MF_01320_B">
    <property type="entry name" value="Ribosomal_uL2_B"/>
    <property type="match status" value="1"/>
</dbReference>
<dbReference type="InterPro" id="IPR012340">
    <property type="entry name" value="NA-bd_OB-fold"/>
</dbReference>
<dbReference type="InterPro" id="IPR014722">
    <property type="entry name" value="Rib_uL2_dom2"/>
</dbReference>
<dbReference type="InterPro" id="IPR002171">
    <property type="entry name" value="Ribosomal_uL2"/>
</dbReference>
<dbReference type="InterPro" id="IPR005880">
    <property type="entry name" value="Ribosomal_uL2_bac/org-type"/>
</dbReference>
<dbReference type="InterPro" id="IPR022669">
    <property type="entry name" value="Ribosomal_uL2_C"/>
</dbReference>
<dbReference type="InterPro" id="IPR022671">
    <property type="entry name" value="Ribosomal_uL2_CS"/>
</dbReference>
<dbReference type="InterPro" id="IPR014726">
    <property type="entry name" value="Ribosomal_uL2_dom3"/>
</dbReference>
<dbReference type="InterPro" id="IPR022666">
    <property type="entry name" value="Ribosomal_uL2_RNA-bd_dom"/>
</dbReference>
<dbReference type="InterPro" id="IPR008991">
    <property type="entry name" value="Translation_prot_SH3-like_sf"/>
</dbReference>
<dbReference type="NCBIfam" id="TIGR01171">
    <property type="entry name" value="rplB_bact"/>
    <property type="match status" value="1"/>
</dbReference>
<dbReference type="PANTHER" id="PTHR13691:SF5">
    <property type="entry name" value="LARGE RIBOSOMAL SUBUNIT PROTEIN UL2M"/>
    <property type="match status" value="1"/>
</dbReference>
<dbReference type="PANTHER" id="PTHR13691">
    <property type="entry name" value="RIBOSOMAL PROTEIN L2"/>
    <property type="match status" value="1"/>
</dbReference>
<dbReference type="Pfam" id="PF00181">
    <property type="entry name" value="Ribosomal_L2"/>
    <property type="match status" value="1"/>
</dbReference>
<dbReference type="Pfam" id="PF03947">
    <property type="entry name" value="Ribosomal_L2_C"/>
    <property type="match status" value="1"/>
</dbReference>
<dbReference type="PIRSF" id="PIRSF002158">
    <property type="entry name" value="Ribosomal_L2"/>
    <property type="match status" value="1"/>
</dbReference>
<dbReference type="SMART" id="SM01383">
    <property type="entry name" value="Ribosomal_L2"/>
    <property type="match status" value="1"/>
</dbReference>
<dbReference type="SMART" id="SM01382">
    <property type="entry name" value="Ribosomal_L2_C"/>
    <property type="match status" value="1"/>
</dbReference>
<dbReference type="SUPFAM" id="SSF50249">
    <property type="entry name" value="Nucleic acid-binding proteins"/>
    <property type="match status" value="1"/>
</dbReference>
<dbReference type="SUPFAM" id="SSF50104">
    <property type="entry name" value="Translation proteins SH3-like domain"/>
    <property type="match status" value="1"/>
</dbReference>
<dbReference type="PROSITE" id="PS00467">
    <property type="entry name" value="RIBOSOMAL_L2"/>
    <property type="match status" value="1"/>
</dbReference>
<reference key="1">
    <citation type="journal article" date="2007" name="PLoS ONE">
        <title>Molecular correlates of host specialization in Staphylococcus aureus.</title>
        <authorList>
            <person name="Herron-Olson L."/>
            <person name="Fitzgerald J.R."/>
            <person name="Musser J.M."/>
            <person name="Kapur V."/>
        </authorList>
    </citation>
    <scope>NUCLEOTIDE SEQUENCE [LARGE SCALE GENOMIC DNA]</scope>
    <source>
        <strain>bovine RF122 / ET3-1</strain>
    </source>
</reference>
<gene>
    <name evidence="1" type="primary">rplB</name>
    <name type="ordered locus">SAB2119c</name>
</gene>
<keyword id="KW-0002">3D-structure</keyword>
<keyword id="KW-0687">Ribonucleoprotein</keyword>
<keyword id="KW-0689">Ribosomal protein</keyword>
<keyword id="KW-0694">RNA-binding</keyword>
<keyword id="KW-0699">rRNA-binding</keyword>
<evidence type="ECO:0000255" key="1">
    <source>
        <dbReference type="HAMAP-Rule" id="MF_01320"/>
    </source>
</evidence>
<evidence type="ECO:0000256" key="2">
    <source>
        <dbReference type="SAM" id="MobiDB-lite"/>
    </source>
</evidence>
<evidence type="ECO:0000305" key="3"/>
<organism>
    <name type="scientific">Staphylococcus aureus (strain bovine RF122 / ET3-1)</name>
    <dbReference type="NCBI Taxonomy" id="273036"/>
    <lineage>
        <taxon>Bacteria</taxon>
        <taxon>Bacillati</taxon>
        <taxon>Bacillota</taxon>
        <taxon>Bacilli</taxon>
        <taxon>Bacillales</taxon>
        <taxon>Staphylococcaceae</taxon>
        <taxon>Staphylococcus</taxon>
    </lineage>
</organism>